<reference key="1">
    <citation type="journal article" date="1997" name="Nature">
        <title>The nucleotide sequence of Saccharomyces cerevisiae chromosome XVI.</title>
        <authorList>
            <person name="Bussey H."/>
            <person name="Storms R.K."/>
            <person name="Ahmed A."/>
            <person name="Albermann K."/>
            <person name="Allen E."/>
            <person name="Ansorge W."/>
            <person name="Araujo R."/>
            <person name="Aparicio A."/>
            <person name="Barrell B.G."/>
            <person name="Badcock K."/>
            <person name="Benes V."/>
            <person name="Botstein D."/>
            <person name="Bowman S."/>
            <person name="Brueckner M."/>
            <person name="Carpenter J."/>
            <person name="Cherry J.M."/>
            <person name="Chung E."/>
            <person name="Churcher C.M."/>
            <person name="Coster F."/>
            <person name="Davis K."/>
            <person name="Davis R.W."/>
            <person name="Dietrich F.S."/>
            <person name="Delius H."/>
            <person name="DiPaolo T."/>
            <person name="Dubois E."/>
            <person name="Duesterhoeft A."/>
            <person name="Duncan M."/>
            <person name="Floeth M."/>
            <person name="Fortin N."/>
            <person name="Friesen J.D."/>
            <person name="Fritz C."/>
            <person name="Goffeau A."/>
            <person name="Hall J."/>
            <person name="Hebling U."/>
            <person name="Heumann K."/>
            <person name="Hilbert H."/>
            <person name="Hillier L.W."/>
            <person name="Hunicke-Smith S."/>
            <person name="Hyman R.W."/>
            <person name="Johnston M."/>
            <person name="Kalman S."/>
            <person name="Kleine K."/>
            <person name="Komp C."/>
            <person name="Kurdi O."/>
            <person name="Lashkari D."/>
            <person name="Lew H."/>
            <person name="Lin A."/>
            <person name="Lin D."/>
            <person name="Louis E.J."/>
            <person name="Marathe R."/>
            <person name="Messenguy F."/>
            <person name="Mewes H.-W."/>
            <person name="Mirtipati S."/>
            <person name="Moestl D."/>
            <person name="Mueller-Auer S."/>
            <person name="Namath A."/>
            <person name="Nentwich U."/>
            <person name="Oefner P."/>
            <person name="Pearson D."/>
            <person name="Petel F.X."/>
            <person name="Pohl T.M."/>
            <person name="Purnelle B."/>
            <person name="Rajandream M.A."/>
            <person name="Rechmann S."/>
            <person name="Rieger M."/>
            <person name="Riles L."/>
            <person name="Roberts D."/>
            <person name="Schaefer M."/>
            <person name="Scharfe M."/>
            <person name="Scherens B."/>
            <person name="Schramm S."/>
            <person name="Schroeder M."/>
            <person name="Sdicu A.-M."/>
            <person name="Tettelin H."/>
            <person name="Urrestarazu L.A."/>
            <person name="Ushinsky S."/>
            <person name="Vierendeels F."/>
            <person name="Vissers S."/>
            <person name="Voss H."/>
            <person name="Walsh S.V."/>
            <person name="Wambutt R."/>
            <person name="Wang Y."/>
            <person name="Wedler E."/>
            <person name="Wedler H."/>
            <person name="Winnett E."/>
            <person name="Zhong W.-W."/>
            <person name="Zollner A."/>
            <person name="Vo D.H."/>
            <person name="Hani J."/>
        </authorList>
    </citation>
    <scope>NUCLEOTIDE SEQUENCE [LARGE SCALE GENOMIC DNA]</scope>
    <source>
        <strain>ATCC 204508 / S288c</strain>
    </source>
</reference>
<reference key="2">
    <citation type="journal article" date="2014" name="G3 (Bethesda)">
        <title>The reference genome sequence of Saccharomyces cerevisiae: Then and now.</title>
        <authorList>
            <person name="Engel S.R."/>
            <person name="Dietrich F.S."/>
            <person name="Fisk D.G."/>
            <person name="Binkley G."/>
            <person name="Balakrishnan R."/>
            <person name="Costanzo M.C."/>
            <person name="Dwight S.S."/>
            <person name="Hitz B.C."/>
            <person name="Karra K."/>
            <person name="Nash R.S."/>
            <person name="Weng S."/>
            <person name="Wong E.D."/>
            <person name="Lloyd P."/>
            <person name="Skrzypek M.S."/>
            <person name="Miyasato S.R."/>
            <person name="Simison M."/>
            <person name="Cherry J.M."/>
        </authorList>
    </citation>
    <scope>GENOME REANNOTATION</scope>
    <source>
        <strain>ATCC 204508 / S288c</strain>
    </source>
</reference>
<reference key="3">
    <citation type="journal article" date="2003" name="J. Biol. Chem.">
        <title>A Noc complex specifically involved in the formation and nuclear export of ribosomal 40 S subunits.</title>
        <authorList>
            <person name="Milkereit P."/>
            <person name="Strauss D."/>
            <person name="Bassler J."/>
            <person name="Gadal O."/>
            <person name="Kuhn H."/>
            <person name="Schutz S."/>
            <person name="Gas N."/>
            <person name="Lechner J."/>
            <person name="Hurt E."/>
            <person name="Tschochner H."/>
        </authorList>
    </citation>
    <scope>FUNCTION</scope>
    <scope>INTERACTION WITH NOP14</scope>
    <scope>SUBCELLULAR LOCATION</scope>
</reference>
<reference key="4">
    <citation type="journal article" date="2003" name="Nature">
        <title>Global analysis of protein expression in yeast.</title>
        <authorList>
            <person name="Ghaemmaghami S."/>
            <person name="Huh W.-K."/>
            <person name="Bower K."/>
            <person name="Howson R.W."/>
            <person name="Belle A."/>
            <person name="Dephoure N."/>
            <person name="O'Shea E.K."/>
            <person name="Weissman J.S."/>
        </authorList>
    </citation>
    <scope>LEVEL OF PROTEIN EXPRESSION [LARGE SCALE ANALYSIS]</scope>
</reference>
<reference key="5">
    <citation type="journal article" date="2004" name="Eukaryot. Cell">
        <title>The small-subunit processome is a ribosome assembly intermediate.</title>
        <authorList>
            <person name="Bernstein K.A."/>
            <person name="Gallagher J.E.G."/>
            <person name="Mitchell B.M."/>
            <person name="Granneman S."/>
            <person name="Baserga S.J."/>
        </authorList>
    </citation>
    <scope>FUNCTION</scope>
    <scope>INTERACTION WITH MPP10 AND SNORNA U3</scope>
    <scope>IDENTIFICATION IN SSU PROCESSOME</scope>
    <scope>SUBCELLULAR LOCATION</scope>
</reference>
<reference key="6">
    <citation type="journal article" date="2005" name="J. Biol. Chem.">
        <title>Specific role for yeast homologs of the Diamond Blackfan anemia-associated Rps19 protein in ribosome synthesis.</title>
        <authorList>
            <person name="Leger-Silvestre I."/>
            <person name="Caffrey J.M."/>
            <person name="Dawaliby R."/>
            <person name="Alvarez-Arias D.A."/>
            <person name="Gas N."/>
            <person name="Bertolone S.J."/>
            <person name="Gleizes P.E."/>
            <person name="Ellis S.R."/>
        </authorList>
    </citation>
    <scope>FUNCTION</scope>
    <scope>SUBCELLULAR LOCATION</scope>
</reference>
<reference key="7">
    <citation type="journal article" date="2012" name="Proc. Natl. Acad. Sci. U.S.A.">
        <title>N-terminal acetylome analyses and functional insights of the N-terminal acetyltransferase NatB.</title>
        <authorList>
            <person name="Van Damme P."/>
            <person name="Lasa M."/>
            <person name="Polevoda B."/>
            <person name="Gazquez C."/>
            <person name="Elosegui-Artola A."/>
            <person name="Kim D.S."/>
            <person name="De Juan-Pardo E."/>
            <person name="Demeyer K."/>
            <person name="Hole K."/>
            <person name="Larrea E."/>
            <person name="Timmerman E."/>
            <person name="Prieto J."/>
            <person name="Arnesen T."/>
            <person name="Sherman F."/>
            <person name="Gevaert K."/>
            <person name="Aldabe R."/>
        </authorList>
    </citation>
    <scope>IDENTIFICATION BY MASS SPECTROMETRY [LARGE SCALE ANALYSIS]</scope>
</reference>
<name>NOC4_YEAST</name>
<sequence>MVLLISEIKDIAKRLTAAGDRKQYNSIIKLINELVIPENVTQLEEDETEKNLRFLVMSLFQIFRKLFSRGDLTLPSSKKSTLEKEQFVNWCRKVYEAFKTKLLAIISDIPFETSLGLDSLDVYLQLAELESTHFASEKGAPFFPNKTFRKLIIALWSSNMGEIEDVKSSGASENLIIVEFTEKYYTKFADIQYYFQSEFNQLLEDPAYQDLLLKNVGKWLALVNHDKHCSSVDADLEIFVPNPPQAIENESKFKSNFEKNWLSLLNGQLSLQQYKSILLILHKRIIPHFHTPTKLMDFLTDSYNLQSSNKNAGVVPILALNGLFELMKRFNLEYPNFYMKLYQIINPDLMHVKYRARFFRLMDVFLSSTHLSAHLVASFIKKLARLTLESPPSAIVTVIPFIYNLIRKHPNCMIMLHNPAFISNPFQTPDQVANLKTLKENYVDPFDVHESDPELTHALDSSLWELASLMEHYHPNVATLAKIFAQPFKKLSYNMEDFLDWNYDSLLNAESSRKLKTLPTLEFEAFTNVFDNEDGDSEASSQGNVYLPGVAW</sequence>
<accession>Q06512</accession>
<accession>D6W4E1</accession>
<organism>
    <name type="scientific">Saccharomyces cerevisiae (strain ATCC 204508 / S288c)</name>
    <name type="common">Baker's yeast</name>
    <dbReference type="NCBI Taxonomy" id="559292"/>
    <lineage>
        <taxon>Eukaryota</taxon>
        <taxon>Fungi</taxon>
        <taxon>Dikarya</taxon>
        <taxon>Ascomycota</taxon>
        <taxon>Saccharomycotina</taxon>
        <taxon>Saccharomycetes</taxon>
        <taxon>Saccharomycetales</taxon>
        <taxon>Saccharomycetaceae</taxon>
        <taxon>Saccharomyces</taxon>
    </lineage>
</organism>
<evidence type="ECO:0000269" key="1">
    <source>
    </source>
</evidence>
<evidence type="ECO:0000269" key="2">
    <source>
    </source>
</evidence>
<evidence type="ECO:0000269" key="3">
    <source>
    </source>
</evidence>
<evidence type="ECO:0000269" key="4">
    <source>
    </source>
</evidence>
<evidence type="ECO:0000305" key="5"/>
<dbReference type="EMBL" id="U40829">
    <property type="protein sequence ID" value="AAB68283.1"/>
    <property type="molecule type" value="Genomic_DNA"/>
</dbReference>
<dbReference type="EMBL" id="BK006949">
    <property type="protein sequence ID" value="DAA11557.1"/>
    <property type="molecule type" value="Genomic_DNA"/>
</dbReference>
<dbReference type="PIR" id="S69032">
    <property type="entry name" value="S69032"/>
</dbReference>
<dbReference type="RefSeq" id="NP_015470.1">
    <property type="nucleotide sequence ID" value="NM_001184241.1"/>
</dbReference>
<dbReference type="PDB" id="5WLC">
    <property type="method" value="EM"/>
    <property type="resolution" value="3.80 A"/>
    <property type="chains" value="SU=147-513"/>
</dbReference>
<dbReference type="PDB" id="6KE6">
    <property type="method" value="EM"/>
    <property type="resolution" value="3.40 A"/>
    <property type="chains" value="RO=1-552"/>
</dbReference>
<dbReference type="PDB" id="6LQP">
    <property type="method" value="EM"/>
    <property type="resolution" value="3.20 A"/>
    <property type="chains" value="RO=1-552"/>
</dbReference>
<dbReference type="PDB" id="6LQQ">
    <property type="method" value="EM"/>
    <property type="resolution" value="4.10 A"/>
    <property type="chains" value="RO=1-552"/>
</dbReference>
<dbReference type="PDB" id="6LQR">
    <property type="method" value="EM"/>
    <property type="resolution" value="8.60 A"/>
    <property type="chains" value="RO=1-552"/>
</dbReference>
<dbReference type="PDB" id="6LQS">
    <property type="method" value="EM"/>
    <property type="resolution" value="3.80 A"/>
    <property type="chains" value="RO=1-552"/>
</dbReference>
<dbReference type="PDB" id="6LQU">
    <property type="method" value="EM"/>
    <property type="resolution" value="3.70 A"/>
    <property type="chains" value="RO=1-552"/>
</dbReference>
<dbReference type="PDB" id="6LQV">
    <property type="method" value="EM"/>
    <property type="resolution" value="4.80 A"/>
    <property type="chains" value="RO=1-552"/>
</dbReference>
<dbReference type="PDB" id="6ZQA">
    <property type="method" value="EM"/>
    <property type="resolution" value="4.40 A"/>
    <property type="chains" value="US=1-552"/>
</dbReference>
<dbReference type="PDB" id="6ZQB">
    <property type="method" value="EM"/>
    <property type="resolution" value="3.90 A"/>
    <property type="chains" value="US=1-552"/>
</dbReference>
<dbReference type="PDB" id="6ZQC">
    <property type="method" value="EM"/>
    <property type="resolution" value="3.80 A"/>
    <property type="chains" value="US=1-552"/>
</dbReference>
<dbReference type="PDB" id="6ZQD">
    <property type="method" value="EM"/>
    <property type="resolution" value="3.80 A"/>
    <property type="chains" value="US=1-552"/>
</dbReference>
<dbReference type="PDB" id="6ZQE">
    <property type="method" value="EM"/>
    <property type="resolution" value="7.10 A"/>
    <property type="chains" value="US=1-552"/>
</dbReference>
<dbReference type="PDB" id="6ZQF">
    <property type="method" value="EM"/>
    <property type="resolution" value="4.90 A"/>
    <property type="chains" value="US=1-552"/>
</dbReference>
<dbReference type="PDB" id="7AJT">
    <property type="method" value="EM"/>
    <property type="resolution" value="4.60 A"/>
    <property type="chains" value="US=1-552"/>
</dbReference>
<dbReference type="PDB" id="7AJU">
    <property type="method" value="EM"/>
    <property type="resolution" value="3.80 A"/>
    <property type="chains" value="US=1-552"/>
</dbReference>
<dbReference type="PDB" id="7D4I">
    <property type="method" value="EM"/>
    <property type="resolution" value="4.00 A"/>
    <property type="chains" value="RO=1-552"/>
</dbReference>
<dbReference type="PDB" id="7D5S">
    <property type="method" value="EM"/>
    <property type="resolution" value="4.60 A"/>
    <property type="chains" value="RO=1-552"/>
</dbReference>
<dbReference type="PDB" id="7D63">
    <property type="method" value="EM"/>
    <property type="resolution" value="12.30 A"/>
    <property type="chains" value="RO=1-552"/>
</dbReference>
<dbReference type="PDB" id="7SUK">
    <property type="method" value="EM"/>
    <property type="resolution" value="3.99 A"/>
    <property type="chains" value="SU=1-513"/>
</dbReference>
<dbReference type="PDBsum" id="5WLC"/>
<dbReference type="PDBsum" id="6KE6"/>
<dbReference type="PDBsum" id="6LQP"/>
<dbReference type="PDBsum" id="6LQQ"/>
<dbReference type="PDBsum" id="6LQR"/>
<dbReference type="PDBsum" id="6LQS"/>
<dbReference type="PDBsum" id="6LQU"/>
<dbReference type="PDBsum" id="6LQV"/>
<dbReference type="PDBsum" id="6ZQA"/>
<dbReference type="PDBsum" id="6ZQB"/>
<dbReference type="PDBsum" id="6ZQC"/>
<dbReference type="PDBsum" id="6ZQD"/>
<dbReference type="PDBsum" id="6ZQE"/>
<dbReference type="PDBsum" id="6ZQF"/>
<dbReference type="PDBsum" id="7AJT"/>
<dbReference type="PDBsum" id="7AJU"/>
<dbReference type="PDBsum" id="7D4I"/>
<dbReference type="PDBsum" id="7D5S"/>
<dbReference type="PDBsum" id="7D63"/>
<dbReference type="PDBsum" id="7SUK"/>
<dbReference type="EMDB" id="EMD-0949"/>
<dbReference type="EMDB" id="EMD-0950"/>
<dbReference type="EMDB" id="EMD-0951"/>
<dbReference type="EMDB" id="EMD-0952"/>
<dbReference type="EMDB" id="EMD-0954"/>
<dbReference type="EMDB" id="EMD-0955"/>
<dbReference type="EMDB" id="EMD-11357"/>
<dbReference type="EMDB" id="EMD-11358"/>
<dbReference type="EMDB" id="EMD-11359"/>
<dbReference type="EMDB" id="EMD-11360"/>
<dbReference type="EMDB" id="EMD-11361"/>
<dbReference type="EMDB" id="EMD-11362"/>
<dbReference type="EMDB" id="EMD-11807"/>
<dbReference type="EMDB" id="EMD-11808"/>
<dbReference type="EMDB" id="EMD-25441"/>
<dbReference type="EMDB" id="EMD-30574"/>
<dbReference type="EMDB" id="EMD-30584"/>
<dbReference type="EMDB" id="EMD-30588"/>
<dbReference type="EMDB" id="EMD-8859"/>
<dbReference type="EMDB" id="EMD-9964"/>
<dbReference type="SMR" id="Q06512"/>
<dbReference type="BioGRID" id="36313">
    <property type="interactions" value="310"/>
</dbReference>
<dbReference type="ComplexPortal" id="CPX-1735">
    <property type="entry name" value="NOP14-NOC4 complex"/>
</dbReference>
<dbReference type="DIP" id="DIP-4555N"/>
<dbReference type="FunCoup" id="Q06512">
    <property type="interactions" value="816"/>
</dbReference>
<dbReference type="IntAct" id="Q06512">
    <property type="interactions" value="88"/>
</dbReference>
<dbReference type="MINT" id="Q06512"/>
<dbReference type="STRING" id="4932.YPR144C"/>
<dbReference type="iPTMnet" id="Q06512"/>
<dbReference type="PaxDb" id="4932-YPR144C"/>
<dbReference type="PeptideAtlas" id="Q06512"/>
<dbReference type="EnsemblFungi" id="YPR144C_mRNA">
    <property type="protein sequence ID" value="YPR144C"/>
    <property type="gene ID" value="YPR144C"/>
</dbReference>
<dbReference type="GeneID" id="856267"/>
<dbReference type="KEGG" id="sce:YPR144C"/>
<dbReference type="AGR" id="SGD:S000006348"/>
<dbReference type="SGD" id="S000006348">
    <property type="gene designation" value="NOC4"/>
</dbReference>
<dbReference type="VEuPathDB" id="FungiDB:YPR144C"/>
<dbReference type="eggNOG" id="KOG2154">
    <property type="taxonomic scope" value="Eukaryota"/>
</dbReference>
<dbReference type="GeneTree" id="ENSGT00390000016776"/>
<dbReference type="HOGENOM" id="CLU_015945_1_0_1"/>
<dbReference type="InParanoid" id="Q06512"/>
<dbReference type="OMA" id="KHPTCMI"/>
<dbReference type="OrthoDB" id="10263185at2759"/>
<dbReference type="BioCyc" id="YEAST:G3O-34278-MONOMER"/>
<dbReference type="Reactome" id="R-SCE-6791226">
    <property type="pathway name" value="Major pathway of rRNA processing in the nucleolus and cytosol"/>
</dbReference>
<dbReference type="BioGRID-ORCS" id="856267">
    <property type="hits" value="6 hits in 10 CRISPR screens"/>
</dbReference>
<dbReference type="PRO" id="PR:Q06512"/>
<dbReference type="Proteomes" id="UP000002311">
    <property type="component" value="Chromosome XVI"/>
</dbReference>
<dbReference type="RNAct" id="Q06512">
    <property type="molecule type" value="protein"/>
</dbReference>
<dbReference type="GO" id="GO:0030686">
    <property type="term" value="C:90S preribosome"/>
    <property type="evidence" value="ECO:0007005"/>
    <property type="project" value="SGD"/>
</dbReference>
<dbReference type="GO" id="GO:0005829">
    <property type="term" value="C:cytosol"/>
    <property type="evidence" value="ECO:0000314"/>
    <property type="project" value="SGD"/>
</dbReference>
<dbReference type="GO" id="GO:0030692">
    <property type="term" value="C:Noc4p-Nop14p complex"/>
    <property type="evidence" value="ECO:0000353"/>
    <property type="project" value="SGD"/>
</dbReference>
<dbReference type="GO" id="GO:0005730">
    <property type="term" value="C:nucleolus"/>
    <property type="evidence" value="ECO:0000314"/>
    <property type="project" value="GO_Central"/>
</dbReference>
<dbReference type="GO" id="GO:0005654">
    <property type="term" value="C:nucleoplasm"/>
    <property type="evidence" value="ECO:0000304"/>
    <property type="project" value="Reactome"/>
</dbReference>
<dbReference type="GO" id="GO:0005634">
    <property type="term" value="C:nucleus"/>
    <property type="evidence" value="ECO:0000314"/>
    <property type="project" value="SGD"/>
</dbReference>
<dbReference type="GO" id="GO:0030688">
    <property type="term" value="C:preribosome, small subunit precursor"/>
    <property type="evidence" value="ECO:0000314"/>
    <property type="project" value="GO_Central"/>
</dbReference>
<dbReference type="GO" id="GO:0032040">
    <property type="term" value="C:small-subunit processome"/>
    <property type="evidence" value="ECO:0000314"/>
    <property type="project" value="SGD"/>
</dbReference>
<dbReference type="GO" id="GO:0000480">
    <property type="term" value="P:endonucleolytic cleavage in 5'-ETS of tricistronic rRNA transcript (SSU-rRNA, 5.8S rRNA, LSU-rRNA)"/>
    <property type="evidence" value="ECO:0000315"/>
    <property type="project" value="SGD"/>
</dbReference>
<dbReference type="GO" id="GO:0000447">
    <property type="term" value="P:endonucleolytic cleavage in ITS1 to separate SSU-rRNA from 5.8S rRNA and LSU-rRNA from tricistronic rRNA transcript (SSU-rRNA, 5.8S rRNA, LSU-rRNA)"/>
    <property type="evidence" value="ECO:0000315"/>
    <property type="project" value="SGD"/>
</dbReference>
<dbReference type="GO" id="GO:0000472">
    <property type="term" value="P:endonucleolytic cleavage to generate mature 5'-end of SSU-rRNA from (SSU-rRNA, 5.8S rRNA, LSU-rRNA)"/>
    <property type="evidence" value="ECO:0000315"/>
    <property type="project" value="SGD"/>
</dbReference>
<dbReference type="GO" id="GO:0030490">
    <property type="term" value="P:maturation of SSU-rRNA"/>
    <property type="evidence" value="ECO:0000303"/>
    <property type="project" value="ComplexPortal"/>
</dbReference>
<dbReference type="GO" id="GO:0000028">
    <property type="term" value="P:ribosomal small subunit assembly"/>
    <property type="evidence" value="ECO:0000303"/>
    <property type="project" value="ComplexPortal"/>
</dbReference>
<dbReference type="GO" id="GO:0042274">
    <property type="term" value="P:ribosomal small subunit biogenesis"/>
    <property type="evidence" value="ECO:0000315"/>
    <property type="project" value="SGD"/>
</dbReference>
<dbReference type="GO" id="GO:0006364">
    <property type="term" value="P:rRNA processing"/>
    <property type="evidence" value="ECO:0000315"/>
    <property type="project" value="SGD"/>
</dbReference>
<dbReference type="InterPro" id="IPR005612">
    <property type="entry name" value="CCAAT-binding_factor"/>
</dbReference>
<dbReference type="InterPro" id="IPR027193">
    <property type="entry name" value="Noc4"/>
</dbReference>
<dbReference type="PANTHER" id="PTHR12455">
    <property type="entry name" value="NUCLEOLAR COMPLEX PROTEIN 4"/>
    <property type="match status" value="1"/>
</dbReference>
<dbReference type="PANTHER" id="PTHR12455:SF0">
    <property type="entry name" value="NUCLEOLAR COMPLEX PROTEIN 4 HOMOLOG"/>
    <property type="match status" value="1"/>
</dbReference>
<dbReference type="Pfam" id="PF03914">
    <property type="entry name" value="CBF"/>
    <property type="match status" value="1"/>
</dbReference>
<feature type="chain" id="PRO_0000173491" description="Nucleolar complex protein 4">
    <location>
        <begin position="1"/>
        <end position="552"/>
    </location>
</feature>
<comment type="function">
    <text evidence="1 3 4">Involved in nucleolar processing of pre-18S ribosomal RNA and ribosome assembly. Has a role in the nuclear export of 40S pre-ribosomal subunit to the cytoplasm. Its subcellular location and association with pre-40S subunit are unaffected by RPS19 disruptions, suggesting it acts before the ribosomal protein.</text>
</comment>
<comment type="subunit">
    <text evidence="1 3">Interacts with NOP14 and MPP10. Interacts with snoRNA U3. Component of the ribosomal small subunit (SSU) processome composed of at least 40 protein subunits and snoRNA U3.</text>
</comment>
<comment type="interaction">
    <interactant intactId="EBI-36459">
        <id>Q06512</id>
    </interactant>
    <interactant intactId="EBI-35157">
        <id>Q99207</id>
        <label>NOP14</label>
    </interactant>
    <organismsDiffer>false</organismsDiffer>
    <experiments>8</experiments>
</comment>
<comment type="interaction">
    <interactant intactId="EBI-36459">
        <id>Q06512</id>
    </interactant>
    <interactant intactId="EBI-36084">
        <id>Q12136</id>
        <label>SAS10</label>
    </interactant>
    <organismsDiffer>false</organismsDiffer>
    <experiments>3</experiments>
</comment>
<comment type="interaction">
    <interactant intactId="EBI-36459">
        <id>Q06512</id>
    </interactant>
    <interactant intactId="EBI-1884">
        <id>P42945</id>
        <label>UTP10</label>
    </interactant>
    <organismsDiffer>false</organismsDiffer>
    <experiments>4</experiments>
</comment>
<comment type="interaction">
    <interactant intactId="EBI-36459">
        <id>Q06512</id>
    </interactant>
    <interactant intactId="EBI-22119">
        <id>Q02354</id>
        <label>UTP6</label>
    </interactant>
    <organismsDiffer>false</organismsDiffer>
    <experiments>5</experiments>
</comment>
<comment type="subcellular location">
    <subcellularLocation>
        <location evidence="1 3 4">Nucleus</location>
        <location evidence="1 3 4">Nucleolus</location>
    </subcellularLocation>
</comment>
<comment type="miscellaneous">
    <text evidence="2">Present with 1630 molecules/cell in log phase SD medium.</text>
</comment>
<comment type="similarity">
    <text evidence="5">Belongs to the CBF/MAK21 family.</text>
</comment>
<keyword id="KW-0002">3D-structure</keyword>
<keyword id="KW-0539">Nucleus</keyword>
<keyword id="KW-1185">Reference proteome</keyword>
<keyword id="KW-0687">Ribonucleoprotein</keyword>
<keyword id="KW-0690">Ribosome biogenesis</keyword>
<keyword id="KW-0698">rRNA processing</keyword>
<gene>
    <name type="primary">NOC4</name>
    <name type="synonym">UTP19</name>
    <name type="ordered locus">YPR144C</name>
</gene>
<proteinExistence type="evidence at protein level"/>
<protein>
    <recommendedName>
        <fullName>Nucleolar complex protein 4</fullName>
    </recommendedName>
    <alternativeName>
        <fullName>U three protein 19</fullName>
    </alternativeName>
    <alternativeName>
        <fullName>U3 small nucleolar RNA-associated protein 19</fullName>
        <shortName>U3 snoRNA-associated protein 19</shortName>
    </alternativeName>
</protein>